<proteinExistence type="evidence at protein level"/>
<evidence type="ECO:0000250" key="1"/>
<evidence type="ECO:0000305" key="2"/>
<evidence type="ECO:0007829" key="3">
    <source>
        <dbReference type="PDB" id="1PFS"/>
    </source>
</evidence>
<comment type="function">
    <text evidence="1">Binds to DNA in a highly cooperative manner without pronounced sequence specificity. During synthesis of the single-stranded (progeny) viral DNA, prevents the conversion into the double-stranded replicative form. G5P is displaced by the capsid protein G8P during phage assembly on the inner bacterial membrane (By similarity).</text>
</comment>
<comment type="subunit">
    <text>Homodimer.</text>
</comment>
<comment type="similarity">
    <text evidence="2">Belongs to the inovirus G5P protein family.</text>
</comment>
<organismHost>
    <name type="scientific">Pseudomonas aeruginosa</name>
    <dbReference type="NCBI Taxonomy" id="287"/>
</organismHost>
<reference key="1">
    <citation type="journal article" date="1985" name="J. Virol.">
        <title>Nucleotide sequence of the genome of Pf3, an IncP-1 plasmid-specific filamentous bacteriophage of Pseudomonas aeruginosa.</title>
        <authorList>
            <person name="Luiten R.G.M."/>
            <person name="Putterman D.G."/>
            <person name="Schoenmakers J.G.G."/>
            <person name="Konings R.N.H."/>
            <person name="Day L.A."/>
        </authorList>
    </citation>
    <scope>NUCLEOTIDE SEQUENCE [GENOMIC DNA]</scope>
    <source>
        <strain>New York</strain>
        <strain>Nijmegen</strain>
    </source>
</reference>
<reference key="2">
    <citation type="journal article" date="1984" name="Proc. Natl. Acad. Sci. U.S.A.">
        <title>Major coat protein and single-stranded DNA-binding protein of filamentous virus Pf3.</title>
        <authorList>
            <person name="Putterman D.G."/>
            <person name="Casadevall A."/>
            <person name="Boyle P.D."/>
            <person name="Yang H.-L."/>
            <person name="Frangione B."/>
            <person name="Day L.A."/>
        </authorList>
    </citation>
    <scope>NUCLEOTIDE SEQUENCE [GENOMIC DNA]</scope>
</reference>
<reference key="3">
    <citation type="journal article" date="1995" name="EMBO J.">
        <title>Solution structure of the single-stranded DNA binding protein of the filamentous Pseudomonas phage Pf3: similarity to other proteins binding to single-stranded nucleic acids.</title>
        <authorList>
            <person name="Folmer R.H.A."/>
            <person name="Nilges M."/>
            <person name="Konings R.N.H."/>
            <person name="Hilbers C.W."/>
        </authorList>
    </citation>
    <scope>STRUCTURE BY NMR</scope>
</reference>
<name>G5P_BPPF3</name>
<sequence>MNIQITFTDSVRQGTSAKGNPYTFQEGFLHLEDKPFPLQCQFFVESVIPAGSYQVPYRINVNNGRPELAFDFKAMKRA</sequence>
<protein>
    <recommendedName>
        <fullName>DNA-Binding protein G5P</fullName>
        <shortName>G5P</shortName>
    </recommendedName>
    <alternativeName>
        <fullName>Single-stranded DNA-binding protein</fullName>
    </alternativeName>
</protein>
<feature type="chain" id="PRO_0000098209" description="DNA-Binding protein G5P">
    <location>
        <begin position="1"/>
        <end position="78"/>
    </location>
</feature>
<feature type="strand" evidence="3">
    <location>
        <begin position="2"/>
        <end position="15"/>
    </location>
</feature>
<feature type="strand" evidence="3">
    <location>
        <begin position="21"/>
        <end position="29"/>
    </location>
</feature>
<feature type="strand" evidence="3">
    <location>
        <begin position="38"/>
        <end position="43"/>
    </location>
</feature>
<feature type="strand" evidence="3">
    <location>
        <begin position="50"/>
        <end position="62"/>
    </location>
</feature>
<feature type="strand" evidence="3">
    <location>
        <begin position="65"/>
        <end position="70"/>
    </location>
</feature>
<keyword id="KW-0002">3D-structure</keyword>
<keyword id="KW-0235">DNA replication</keyword>
<keyword id="KW-0238">DNA-binding</keyword>
<keyword id="KW-1185">Reference proteome</keyword>
<dbReference type="EMBL" id="K01435">
    <property type="protein sequence ID" value="AAA72242.1"/>
    <property type="molecule type" value="Genomic_DNA"/>
</dbReference>
<dbReference type="EMBL" id="M19377">
    <property type="protein sequence ID" value="AAA88394.1"/>
    <property type="molecule type" value="Genomic_DNA"/>
</dbReference>
<dbReference type="EMBL" id="M11912">
    <property type="protein sequence ID" value="AAA88385.1"/>
    <property type="molecule type" value="Genomic_DNA"/>
</dbReference>
<dbReference type="PIR" id="A04274">
    <property type="entry name" value="DNBPP3"/>
</dbReference>
<dbReference type="PIR" id="S48151">
    <property type="entry name" value="S48151"/>
</dbReference>
<dbReference type="RefSeq" id="NP_040659.1">
    <property type="nucleotide sequence ID" value="NC_001418.1"/>
</dbReference>
<dbReference type="PDB" id="1PFS">
    <property type="method" value="NMR"/>
    <property type="chains" value="A/B=1-78"/>
</dbReference>
<dbReference type="PDBsum" id="1PFS"/>
<dbReference type="SMR" id="P03672"/>
<dbReference type="KEGG" id="vg:1260902"/>
<dbReference type="Proteomes" id="UP000001719">
    <property type="component" value="Genome"/>
</dbReference>
<dbReference type="Proteomes" id="UP000009090">
    <property type="component" value="Genome"/>
</dbReference>
<dbReference type="GO" id="GO:0003677">
    <property type="term" value="F:DNA binding"/>
    <property type="evidence" value="ECO:0007669"/>
    <property type="project" value="UniProtKB-KW"/>
</dbReference>
<dbReference type="GO" id="GO:0006260">
    <property type="term" value="P:DNA replication"/>
    <property type="evidence" value="ECO:0007669"/>
    <property type="project" value="UniProtKB-KW"/>
</dbReference>
<dbReference type="Gene3D" id="2.40.50.140">
    <property type="entry name" value="Nucleic acid-binding proteins"/>
    <property type="match status" value="1"/>
</dbReference>
<dbReference type="InterPro" id="IPR012340">
    <property type="entry name" value="NA-bd_OB-fold"/>
</dbReference>
<dbReference type="InterPro" id="IPR040905">
    <property type="entry name" value="SS_DBP_Pseudomonas"/>
</dbReference>
<dbReference type="Pfam" id="PF17878">
    <property type="entry name" value="ssDBP"/>
    <property type="match status" value="1"/>
</dbReference>
<dbReference type="SUPFAM" id="SSF50249">
    <property type="entry name" value="Nucleic acid-binding proteins"/>
    <property type="match status" value="1"/>
</dbReference>
<organism>
    <name type="scientific">Pseudomonas phage Pf3</name>
    <name type="common">Bacteriophage Pf3</name>
    <dbReference type="NCBI Taxonomy" id="10872"/>
    <lineage>
        <taxon>Viruses</taxon>
        <taxon>Monodnaviria</taxon>
        <taxon>Loebvirae</taxon>
        <taxon>Hofneiviricota</taxon>
        <taxon>Faserviricetes</taxon>
        <taxon>Tubulavirales</taxon>
        <taxon>Inoviridae</taxon>
        <taxon>Tertilicivirus</taxon>
        <taxon>Tertilicivirus Pf3</taxon>
    </lineage>
</organism>
<accession>P03672</accession>
<gene>
    <name type="primary">V</name>
</gene>